<name>SYFA_STAA9</name>
<accession>A5IS24</accession>
<comment type="catalytic activity">
    <reaction evidence="1">
        <text>tRNA(Phe) + L-phenylalanine + ATP = L-phenylalanyl-tRNA(Phe) + AMP + diphosphate + H(+)</text>
        <dbReference type="Rhea" id="RHEA:19413"/>
        <dbReference type="Rhea" id="RHEA-COMP:9668"/>
        <dbReference type="Rhea" id="RHEA-COMP:9699"/>
        <dbReference type="ChEBI" id="CHEBI:15378"/>
        <dbReference type="ChEBI" id="CHEBI:30616"/>
        <dbReference type="ChEBI" id="CHEBI:33019"/>
        <dbReference type="ChEBI" id="CHEBI:58095"/>
        <dbReference type="ChEBI" id="CHEBI:78442"/>
        <dbReference type="ChEBI" id="CHEBI:78531"/>
        <dbReference type="ChEBI" id="CHEBI:456215"/>
        <dbReference type="EC" id="6.1.1.20"/>
    </reaction>
</comment>
<comment type="cofactor">
    <cofactor evidence="1">
        <name>Mg(2+)</name>
        <dbReference type="ChEBI" id="CHEBI:18420"/>
    </cofactor>
    <text evidence="1">Binds 2 magnesium ions per tetramer.</text>
</comment>
<comment type="subunit">
    <text evidence="1">Tetramer of two alpha and two beta subunits.</text>
</comment>
<comment type="subcellular location">
    <subcellularLocation>
        <location evidence="1">Cytoplasm</location>
    </subcellularLocation>
</comment>
<comment type="similarity">
    <text evidence="1">Belongs to the class-II aminoacyl-tRNA synthetase family. Phe-tRNA synthetase alpha subunit type 1 subfamily.</text>
</comment>
<evidence type="ECO:0000255" key="1">
    <source>
        <dbReference type="HAMAP-Rule" id="MF_00281"/>
    </source>
</evidence>
<reference key="1">
    <citation type="submission" date="2007-05" db="EMBL/GenBank/DDBJ databases">
        <title>Complete sequence of chromosome of Staphylococcus aureus subsp. aureus JH9.</title>
        <authorList>
            <consortium name="US DOE Joint Genome Institute"/>
            <person name="Copeland A."/>
            <person name="Lucas S."/>
            <person name="Lapidus A."/>
            <person name="Barry K."/>
            <person name="Detter J.C."/>
            <person name="Glavina del Rio T."/>
            <person name="Hammon N."/>
            <person name="Israni S."/>
            <person name="Pitluck S."/>
            <person name="Chain P."/>
            <person name="Malfatti S."/>
            <person name="Shin M."/>
            <person name="Vergez L."/>
            <person name="Schmutz J."/>
            <person name="Larimer F."/>
            <person name="Land M."/>
            <person name="Hauser L."/>
            <person name="Kyrpides N."/>
            <person name="Kim E."/>
            <person name="Tomasz A."/>
            <person name="Richardson P."/>
        </authorList>
    </citation>
    <scope>NUCLEOTIDE SEQUENCE [LARGE SCALE GENOMIC DNA]</scope>
    <source>
        <strain>JH9</strain>
    </source>
</reference>
<organism>
    <name type="scientific">Staphylococcus aureus (strain JH9)</name>
    <dbReference type="NCBI Taxonomy" id="359786"/>
    <lineage>
        <taxon>Bacteria</taxon>
        <taxon>Bacillati</taxon>
        <taxon>Bacillota</taxon>
        <taxon>Bacilli</taxon>
        <taxon>Bacillales</taxon>
        <taxon>Staphylococcaceae</taxon>
        <taxon>Staphylococcus</taxon>
    </lineage>
</organism>
<proteinExistence type="inferred from homology"/>
<dbReference type="EC" id="6.1.1.20" evidence="1"/>
<dbReference type="EMBL" id="CP000703">
    <property type="protein sequence ID" value="ABQ48997.1"/>
    <property type="molecule type" value="Genomic_DNA"/>
</dbReference>
<dbReference type="RefSeq" id="WP_000003566.1">
    <property type="nucleotide sequence ID" value="NC_009487.1"/>
</dbReference>
<dbReference type="SMR" id="A5IS24"/>
<dbReference type="KEGG" id="saj:SaurJH9_1197"/>
<dbReference type="HOGENOM" id="CLU_025086_0_1_9"/>
<dbReference type="GO" id="GO:0005737">
    <property type="term" value="C:cytoplasm"/>
    <property type="evidence" value="ECO:0007669"/>
    <property type="project" value="UniProtKB-SubCell"/>
</dbReference>
<dbReference type="GO" id="GO:0005524">
    <property type="term" value="F:ATP binding"/>
    <property type="evidence" value="ECO:0007669"/>
    <property type="project" value="UniProtKB-UniRule"/>
</dbReference>
<dbReference type="GO" id="GO:0140096">
    <property type="term" value="F:catalytic activity, acting on a protein"/>
    <property type="evidence" value="ECO:0007669"/>
    <property type="project" value="UniProtKB-ARBA"/>
</dbReference>
<dbReference type="GO" id="GO:0000287">
    <property type="term" value="F:magnesium ion binding"/>
    <property type="evidence" value="ECO:0007669"/>
    <property type="project" value="UniProtKB-UniRule"/>
</dbReference>
<dbReference type="GO" id="GO:0004826">
    <property type="term" value="F:phenylalanine-tRNA ligase activity"/>
    <property type="evidence" value="ECO:0007669"/>
    <property type="project" value="UniProtKB-UniRule"/>
</dbReference>
<dbReference type="GO" id="GO:0016740">
    <property type="term" value="F:transferase activity"/>
    <property type="evidence" value="ECO:0007669"/>
    <property type="project" value="UniProtKB-ARBA"/>
</dbReference>
<dbReference type="GO" id="GO:0000049">
    <property type="term" value="F:tRNA binding"/>
    <property type="evidence" value="ECO:0007669"/>
    <property type="project" value="InterPro"/>
</dbReference>
<dbReference type="GO" id="GO:0006432">
    <property type="term" value="P:phenylalanyl-tRNA aminoacylation"/>
    <property type="evidence" value="ECO:0007669"/>
    <property type="project" value="UniProtKB-UniRule"/>
</dbReference>
<dbReference type="CDD" id="cd00496">
    <property type="entry name" value="PheRS_alpha_core"/>
    <property type="match status" value="1"/>
</dbReference>
<dbReference type="FunFam" id="3.30.930.10:FF:000003">
    <property type="entry name" value="Phenylalanine--tRNA ligase alpha subunit"/>
    <property type="match status" value="1"/>
</dbReference>
<dbReference type="Gene3D" id="3.30.930.10">
    <property type="entry name" value="Bira Bifunctional Protein, Domain 2"/>
    <property type="match status" value="1"/>
</dbReference>
<dbReference type="HAMAP" id="MF_00281">
    <property type="entry name" value="Phe_tRNA_synth_alpha1"/>
    <property type="match status" value="1"/>
</dbReference>
<dbReference type="InterPro" id="IPR006195">
    <property type="entry name" value="aa-tRNA-synth_II"/>
</dbReference>
<dbReference type="InterPro" id="IPR045864">
    <property type="entry name" value="aa-tRNA-synth_II/BPL/LPL"/>
</dbReference>
<dbReference type="InterPro" id="IPR004529">
    <property type="entry name" value="Phe-tRNA-synth_IIc_asu"/>
</dbReference>
<dbReference type="InterPro" id="IPR004188">
    <property type="entry name" value="Phe-tRNA_ligase_II_N"/>
</dbReference>
<dbReference type="InterPro" id="IPR022911">
    <property type="entry name" value="Phe_tRNA_ligase_alpha1_bac"/>
</dbReference>
<dbReference type="InterPro" id="IPR002319">
    <property type="entry name" value="Phenylalanyl-tRNA_Synthase"/>
</dbReference>
<dbReference type="InterPro" id="IPR010978">
    <property type="entry name" value="tRNA-bd_arm"/>
</dbReference>
<dbReference type="NCBIfam" id="TIGR00468">
    <property type="entry name" value="pheS"/>
    <property type="match status" value="1"/>
</dbReference>
<dbReference type="PANTHER" id="PTHR11538:SF41">
    <property type="entry name" value="PHENYLALANINE--TRNA LIGASE, MITOCHONDRIAL"/>
    <property type="match status" value="1"/>
</dbReference>
<dbReference type="PANTHER" id="PTHR11538">
    <property type="entry name" value="PHENYLALANYL-TRNA SYNTHETASE"/>
    <property type="match status" value="1"/>
</dbReference>
<dbReference type="Pfam" id="PF02912">
    <property type="entry name" value="Phe_tRNA-synt_N"/>
    <property type="match status" value="1"/>
</dbReference>
<dbReference type="Pfam" id="PF01409">
    <property type="entry name" value="tRNA-synt_2d"/>
    <property type="match status" value="1"/>
</dbReference>
<dbReference type="SUPFAM" id="SSF55681">
    <property type="entry name" value="Class II aaRS and biotin synthetases"/>
    <property type="match status" value="1"/>
</dbReference>
<dbReference type="SUPFAM" id="SSF46589">
    <property type="entry name" value="tRNA-binding arm"/>
    <property type="match status" value="1"/>
</dbReference>
<dbReference type="PROSITE" id="PS50862">
    <property type="entry name" value="AA_TRNA_LIGASE_II"/>
    <property type="match status" value="1"/>
</dbReference>
<feature type="chain" id="PRO_1000078852" description="Phenylalanine--tRNA ligase alpha subunit">
    <location>
        <begin position="1"/>
        <end position="352"/>
    </location>
</feature>
<feature type="binding site" evidence="1">
    <location>
        <position position="258"/>
    </location>
    <ligand>
        <name>Mg(2+)</name>
        <dbReference type="ChEBI" id="CHEBI:18420"/>
        <note>shared with beta subunit</note>
    </ligand>
</feature>
<sequence>MSEQQTMSELKQQALVDINEANDERALQEVKVKYLGKKGSVSGLMKLMKDLPNEEKPAFGQKVNELRQTIQNELDERQQMLVKEKLNKQLAEETIDVSLPGRHIEIGSKHPLTRTIEEIEDLFLGLGYEIVNGYEVEQDHYNFEMLNLPKSHPARDMQDSFYITDEILLRTHTSPVQARTMESRHGQGPVKIICPGKVYRRDSDDATHSHQFTQIEGLVVDKNVKMSDLKGTLELLAKKLFGADREIRLRPSYFPFTEPSVEVDVSCFKCKGKGCNVCKHTGWIEILGAGMVHPNVLEMAGFDSSEYSGFAFGMGPDRIAMLKYGIEDIRHFYTNDVRFLDQFKAVEDRGDM</sequence>
<keyword id="KW-0030">Aminoacyl-tRNA synthetase</keyword>
<keyword id="KW-0067">ATP-binding</keyword>
<keyword id="KW-0963">Cytoplasm</keyword>
<keyword id="KW-0436">Ligase</keyword>
<keyword id="KW-0460">Magnesium</keyword>
<keyword id="KW-0479">Metal-binding</keyword>
<keyword id="KW-0547">Nucleotide-binding</keyword>
<keyword id="KW-0648">Protein biosynthesis</keyword>
<gene>
    <name evidence="1" type="primary">pheS</name>
    <name type="ordered locus">SaurJH9_1197</name>
</gene>
<protein>
    <recommendedName>
        <fullName evidence="1">Phenylalanine--tRNA ligase alpha subunit</fullName>
        <ecNumber evidence="1">6.1.1.20</ecNumber>
    </recommendedName>
    <alternativeName>
        <fullName evidence="1">Phenylalanyl-tRNA synthetase alpha subunit</fullName>
        <shortName evidence="1">PheRS</shortName>
    </alternativeName>
</protein>